<gene>
    <name type="primary">yteJ</name>
    <name type="ordered locus">BSU29520</name>
</gene>
<accession>O34424</accession>
<accession>Q795U0</accession>
<name>YTEJ_BACSU</name>
<reference key="1">
    <citation type="journal article" date="1997" name="Microbiology">
        <title>Sequencing and functional annotation of the Bacillus subtilis genes in the 200 kb rrnB-dnaB region.</title>
        <authorList>
            <person name="Lapidus A."/>
            <person name="Galleron N."/>
            <person name="Sorokin A."/>
            <person name="Ehrlich S.D."/>
        </authorList>
    </citation>
    <scope>NUCLEOTIDE SEQUENCE [GENOMIC DNA]</scope>
    <source>
        <strain>168</strain>
    </source>
</reference>
<reference key="2">
    <citation type="journal article" date="1997" name="Nature">
        <title>The complete genome sequence of the Gram-positive bacterium Bacillus subtilis.</title>
        <authorList>
            <person name="Kunst F."/>
            <person name="Ogasawara N."/>
            <person name="Moszer I."/>
            <person name="Albertini A.M."/>
            <person name="Alloni G."/>
            <person name="Azevedo V."/>
            <person name="Bertero M.G."/>
            <person name="Bessieres P."/>
            <person name="Bolotin A."/>
            <person name="Borchert S."/>
            <person name="Borriss R."/>
            <person name="Boursier L."/>
            <person name="Brans A."/>
            <person name="Braun M."/>
            <person name="Brignell S.C."/>
            <person name="Bron S."/>
            <person name="Brouillet S."/>
            <person name="Bruschi C.V."/>
            <person name="Caldwell B."/>
            <person name="Capuano V."/>
            <person name="Carter N.M."/>
            <person name="Choi S.-K."/>
            <person name="Codani J.-J."/>
            <person name="Connerton I.F."/>
            <person name="Cummings N.J."/>
            <person name="Daniel R.A."/>
            <person name="Denizot F."/>
            <person name="Devine K.M."/>
            <person name="Duesterhoeft A."/>
            <person name="Ehrlich S.D."/>
            <person name="Emmerson P.T."/>
            <person name="Entian K.-D."/>
            <person name="Errington J."/>
            <person name="Fabret C."/>
            <person name="Ferrari E."/>
            <person name="Foulger D."/>
            <person name="Fritz C."/>
            <person name="Fujita M."/>
            <person name="Fujita Y."/>
            <person name="Fuma S."/>
            <person name="Galizzi A."/>
            <person name="Galleron N."/>
            <person name="Ghim S.-Y."/>
            <person name="Glaser P."/>
            <person name="Goffeau A."/>
            <person name="Golightly E.J."/>
            <person name="Grandi G."/>
            <person name="Guiseppi G."/>
            <person name="Guy B.J."/>
            <person name="Haga K."/>
            <person name="Haiech J."/>
            <person name="Harwood C.R."/>
            <person name="Henaut A."/>
            <person name="Hilbert H."/>
            <person name="Holsappel S."/>
            <person name="Hosono S."/>
            <person name="Hullo M.-F."/>
            <person name="Itaya M."/>
            <person name="Jones L.-M."/>
            <person name="Joris B."/>
            <person name="Karamata D."/>
            <person name="Kasahara Y."/>
            <person name="Klaerr-Blanchard M."/>
            <person name="Klein C."/>
            <person name="Kobayashi Y."/>
            <person name="Koetter P."/>
            <person name="Koningstein G."/>
            <person name="Krogh S."/>
            <person name="Kumano M."/>
            <person name="Kurita K."/>
            <person name="Lapidus A."/>
            <person name="Lardinois S."/>
            <person name="Lauber J."/>
            <person name="Lazarevic V."/>
            <person name="Lee S.-M."/>
            <person name="Levine A."/>
            <person name="Liu H."/>
            <person name="Masuda S."/>
            <person name="Mauel C."/>
            <person name="Medigue C."/>
            <person name="Medina N."/>
            <person name="Mellado R.P."/>
            <person name="Mizuno M."/>
            <person name="Moestl D."/>
            <person name="Nakai S."/>
            <person name="Noback M."/>
            <person name="Noone D."/>
            <person name="O'Reilly M."/>
            <person name="Ogawa K."/>
            <person name="Ogiwara A."/>
            <person name="Oudega B."/>
            <person name="Park S.-H."/>
            <person name="Parro V."/>
            <person name="Pohl T.M."/>
            <person name="Portetelle D."/>
            <person name="Porwollik S."/>
            <person name="Prescott A.M."/>
            <person name="Presecan E."/>
            <person name="Pujic P."/>
            <person name="Purnelle B."/>
            <person name="Rapoport G."/>
            <person name="Rey M."/>
            <person name="Reynolds S."/>
            <person name="Rieger M."/>
            <person name="Rivolta C."/>
            <person name="Rocha E."/>
            <person name="Roche B."/>
            <person name="Rose M."/>
            <person name="Sadaie Y."/>
            <person name="Sato T."/>
            <person name="Scanlan E."/>
            <person name="Schleich S."/>
            <person name="Schroeter R."/>
            <person name="Scoffone F."/>
            <person name="Sekiguchi J."/>
            <person name="Sekowska A."/>
            <person name="Seror S.J."/>
            <person name="Serror P."/>
            <person name="Shin B.-S."/>
            <person name="Soldo B."/>
            <person name="Sorokin A."/>
            <person name="Tacconi E."/>
            <person name="Takagi T."/>
            <person name="Takahashi H."/>
            <person name="Takemaru K."/>
            <person name="Takeuchi M."/>
            <person name="Tamakoshi A."/>
            <person name="Tanaka T."/>
            <person name="Terpstra P."/>
            <person name="Tognoni A."/>
            <person name="Tosato V."/>
            <person name="Uchiyama S."/>
            <person name="Vandenbol M."/>
            <person name="Vannier F."/>
            <person name="Vassarotti A."/>
            <person name="Viari A."/>
            <person name="Wambutt R."/>
            <person name="Wedler E."/>
            <person name="Wedler H."/>
            <person name="Weitzenegger T."/>
            <person name="Winters P."/>
            <person name="Wipat A."/>
            <person name="Yamamoto H."/>
            <person name="Yamane K."/>
            <person name="Yasumoto K."/>
            <person name="Yata K."/>
            <person name="Yoshida K."/>
            <person name="Yoshikawa H.-F."/>
            <person name="Zumstein E."/>
            <person name="Yoshikawa H."/>
            <person name="Danchin A."/>
        </authorList>
    </citation>
    <scope>NUCLEOTIDE SEQUENCE [LARGE SCALE GENOMIC DNA]</scope>
    <source>
        <strain>168</strain>
    </source>
</reference>
<dbReference type="EMBL" id="AF008220">
    <property type="protein sequence ID" value="AAC00313.1"/>
    <property type="molecule type" value="Genomic_DNA"/>
</dbReference>
<dbReference type="EMBL" id="AL009126">
    <property type="protein sequence ID" value="CAB14930.1"/>
    <property type="molecule type" value="Genomic_DNA"/>
</dbReference>
<dbReference type="PIR" id="F69990">
    <property type="entry name" value="F69990"/>
</dbReference>
<dbReference type="RefSeq" id="NP_390830.1">
    <property type="nucleotide sequence ID" value="NC_000964.3"/>
</dbReference>
<dbReference type="RefSeq" id="WP_003229340.1">
    <property type="nucleotide sequence ID" value="NZ_OZ025638.1"/>
</dbReference>
<dbReference type="FunCoup" id="O34424">
    <property type="interactions" value="5"/>
</dbReference>
<dbReference type="STRING" id="224308.BSU29520"/>
<dbReference type="PaxDb" id="224308-BSU29520"/>
<dbReference type="EnsemblBacteria" id="CAB14930">
    <property type="protein sequence ID" value="CAB14930"/>
    <property type="gene ID" value="BSU_29520"/>
</dbReference>
<dbReference type="GeneID" id="937343"/>
<dbReference type="KEGG" id="bsu:BSU29520"/>
<dbReference type="PATRIC" id="fig|224308.179.peg.3207"/>
<dbReference type="eggNOG" id="COG1714">
    <property type="taxonomic scope" value="Bacteria"/>
</dbReference>
<dbReference type="InParanoid" id="O34424"/>
<dbReference type="OrthoDB" id="9793824at2"/>
<dbReference type="PhylomeDB" id="O34424"/>
<dbReference type="BioCyc" id="BSUB:BSU29520-MONOMER"/>
<dbReference type="Proteomes" id="UP000001570">
    <property type="component" value="Chromosome"/>
</dbReference>
<dbReference type="GO" id="GO:0005886">
    <property type="term" value="C:plasma membrane"/>
    <property type="evidence" value="ECO:0007669"/>
    <property type="project" value="UniProtKB-SubCell"/>
</dbReference>
<dbReference type="InterPro" id="IPR051791">
    <property type="entry name" value="Pra-immunoreactive"/>
</dbReference>
<dbReference type="InterPro" id="IPR010432">
    <property type="entry name" value="RDD"/>
</dbReference>
<dbReference type="PANTHER" id="PTHR36115:SF9">
    <property type="entry name" value="LMO1584 PROTEIN"/>
    <property type="match status" value="1"/>
</dbReference>
<dbReference type="PANTHER" id="PTHR36115">
    <property type="entry name" value="PROLINE-RICH ANTIGEN HOMOLOG-RELATED"/>
    <property type="match status" value="1"/>
</dbReference>
<dbReference type="Pfam" id="PF06271">
    <property type="entry name" value="RDD"/>
    <property type="match status" value="1"/>
</dbReference>
<sequence>MDATYEELERNDIKGPQEAELLTHAYAGFWVRFWAFLLDWLVIWGLNHLLVSPLFTVLDLPKTSGMFTFSAYSVTTLIVYLAYFALMTKYFRQTLGKMVFGLKVVSVKQDSKLTWSTVIFREVVGRYIDKIWILYIVVAFSPTKQGIHDYIADTTVVHEKLYRK</sequence>
<keyword id="KW-1003">Cell membrane</keyword>
<keyword id="KW-0472">Membrane</keyword>
<keyword id="KW-1185">Reference proteome</keyword>
<keyword id="KW-0812">Transmembrane</keyword>
<keyword id="KW-1133">Transmembrane helix</keyword>
<protein>
    <recommendedName>
        <fullName>Uncharacterized membrane protein YteJ</fullName>
    </recommendedName>
</protein>
<proteinExistence type="predicted"/>
<feature type="chain" id="PRO_0000388799" description="Uncharacterized membrane protein YteJ">
    <location>
        <begin position="1"/>
        <end position="164"/>
    </location>
</feature>
<feature type="transmembrane region" description="Helical" evidence="1">
    <location>
        <begin position="35"/>
        <end position="55"/>
    </location>
</feature>
<feature type="transmembrane region" description="Helical" evidence="1">
    <location>
        <begin position="66"/>
        <end position="86"/>
    </location>
</feature>
<feature type="domain" description="RDD">
    <location>
        <begin position="26"/>
        <end position="158"/>
    </location>
</feature>
<evidence type="ECO:0000255" key="1"/>
<evidence type="ECO:0000305" key="2"/>
<organism>
    <name type="scientific">Bacillus subtilis (strain 168)</name>
    <dbReference type="NCBI Taxonomy" id="224308"/>
    <lineage>
        <taxon>Bacteria</taxon>
        <taxon>Bacillati</taxon>
        <taxon>Bacillota</taxon>
        <taxon>Bacilli</taxon>
        <taxon>Bacillales</taxon>
        <taxon>Bacillaceae</taxon>
        <taxon>Bacillus</taxon>
    </lineage>
</organism>
<comment type="subcellular location">
    <subcellularLocation>
        <location evidence="2">Cell membrane</location>
        <topology evidence="2">Multi-pass membrane protein</topology>
    </subcellularLocation>
</comment>